<protein>
    <recommendedName>
        <fullName evidence="1">Small ribosomal subunit protein bS6</fullName>
    </recommendedName>
    <alternativeName>
        <fullName evidence="3">30S ribosomal protein S6</fullName>
    </alternativeName>
</protein>
<gene>
    <name evidence="1" type="primary">rpsF</name>
    <name type="ordered locus">BCAN_A0460</name>
</gene>
<sequence length="148" mass="17083">MALYEHVLLARQDISQQQVDALVEQFKGVLEANGGKFGKVENWGLRPLTYRIKKNRKAYYTLVNIDAPAAAVAEMERQMRINEDVLRFLTVRVEEHEEGQSAMLTRRDDRRERDGDDRPRRREGGFDRGDRGDRGPRRPRDTEAGEGA</sequence>
<reference key="1">
    <citation type="submission" date="2007-10" db="EMBL/GenBank/DDBJ databases">
        <title>Brucella canis ATCC 23365 whole genome shotgun sequencing project.</title>
        <authorList>
            <person name="Setubal J.C."/>
            <person name="Bowns C."/>
            <person name="Boyle S."/>
            <person name="Crasta O.R."/>
            <person name="Czar M.J."/>
            <person name="Dharmanolla C."/>
            <person name="Gillespie J.J."/>
            <person name="Kenyon R.W."/>
            <person name="Lu J."/>
            <person name="Mane S."/>
            <person name="Mohapatra S."/>
            <person name="Nagrani S."/>
            <person name="Purkayastha A."/>
            <person name="Rajasimha H.K."/>
            <person name="Shallom J.M."/>
            <person name="Shallom S."/>
            <person name="Shukla M."/>
            <person name="Snyder E.E."/>
            <person name="Sobral B.W."/>
            <person name="Wattam A.R."/>
            <person name="Will R."/>
            <person name="Williams K."/>
            <person name="Yoo H."/>
            <person name="Bruce D."/>
            <person name="Detter C."/>
            <person name="Munk C."/>
            <person name="Brettin T.S."/>
        </authorList>
    </citation>
    <scope>NUCLEOTIDE SEQUENCE [LARGE SCALE GENOMIC DNA]</scope>
    <source>
        <strain>ATCC 23365 / NCTC 10854 / RM-666</strain>
    </source>
</reference>
<proteinExistence type="inferred from homology"/>
<keyword id="KW-1185">Reference proteome</keyword>
<keyword id="KW-0687">Ribonucleoprotein</keyword>
<keyword id="KW-0689">Ribosomal protein</keyword>
<keyword id="KW-0694">RNA-binding</keyword>
<keyword id="KW-0699">rRNA-binding</keyword>
<dbReference type="EMBL" id="CP000872">
    <property type="protein sequence ID" value="ABX61542.1"/>
    <property type="molecule type" value="Genomic_DNA"/>
</dbReference>
<dbReference type="RefSeq" id="WP_004690607.1">
    <property type="nucleotide sequence ID" value="NC_010103.1"/>
</dbReference>
<dbReference type="SMR" id="A9M8X8"/>
<dbReference type="GeneID" id="55590213"/>
<dbReference type="KEGG" id="bcs:BCAN_A0460"/>
<dbReference type="HOGENOM" id="CLU_113441_2_0_5"/>
<dbReference type="PhylomeDB" id="A9M8X8"/>
<dbReference type="Proteomes" id="UP000001385">
    <property type="component" value="Chromosome I"/>
</dbReference>
<dbReference type="GO" id="GO:0022627">
    <property type="term" value="C:cytosolic small ribosomal subunit"/>
    <property type="evidence" value="ECO:0007669"/>
    <property type="project" value="TreeGrafter"/>
</dbReference>
<dbReference type="GO" id="GO:0070181">
    <property type="term" value="F:small ribosomal subunit rRNA binding"/>
    <property type="evidence" value="ECO:0007669"/>
    <property type="project" value="TreeGrafter"/>
</dbReference>
<dbReference type="GO" id="GO:0003735">
    <property type="term" value="F:structural constituent of ribosome"/>
    <property type="evidence" value="ECO:0007669"/>
    <property type="project" value="InterPro"/>
</dbReference>
<dbReference type="GO" id="GO:0006412">
    <property type="term" value="P:translation"/>
    <property type="evidence" value="ECO:0007669"/>
    <property type="project" value="UniProtKB-UniRule"/>
</dbReference>
<dbReference type="CDD" id="cd00473">
    <property type="entry name" value="bS6"/>
    <property type="match status" value="1"/>
</dbReference>
<dbReference type="Gene3D" id="3.30.70.60">
    <property type="match status" value="1"/>
</dbReference>
<dbReference type="HAMAP" id="MF_00360">
    <property type="entry name" value="Ribosomal_bS6"/>
    <property type="match status" value="1"/>
</dbReference>
<dbReference type="InterPro" id="IPR000529">
    <property type="entry name" value="Ribosomal_bS6"/>
</dbReference>
<dbReference type="InterPro" id="IPR035980">
    <property type="entry name" value="Ribosomal_bS6_sf"/>
</dbReference>
<dbReference type="InterPro" id="IPR020814">
    <property type="entry name" value="Ribosomal_S6_plastid/chlpt"/>
</dbReference>
<dbReference type="InterPro" id="IPR014717">
    <property type="entry name" value="Transl_elong_EF1B/ribsomal_bS6"/>
</dbReference>
<dbReference type="NCBIfam" id="TIGR00166">
    <property type="entry name" value="S6"/>
    <property type="match status" value="1"/>
</dbReference>
<dbReference type="PANTHER" id="PTHR21011">
    <property type="entry name" value="MITOCHONDRIAL 28S RIBOSOMAL PROTEIN S6"/>
    <property type="match status" value="1"/>
</dbReference>
<dbReference type="PANTHER" id="PTHR21011:SF1">
    <property type="entry name" value="SMALL RIBOSOMAL SUBUNIT PROTEIN BS6M"/>
    <property type="match status" value="1"/>
</dbReference>
<dbReference type="Pfam" id="PF01250">
    <property type="entry name" value="Ribosomal_S6"/>
    <property type="match status" value="1"/>
</dbReference>
<dbReference type="SUPFAM" id="SSF54995">
    <property type="entry name" value="Ribosomal protein S6"/>
    <property type="match status" value="1"/>
</dbReference>
<feature type="chain" id="PRO_1000079434" description="Small ribosomal subunit protein bS6">
    <location>
        <begin position="1"/>
        <end position="148"/>
    </location>
</feature>
<feature type="region of interest" description="Disordered" evidence="2">
    <location>
        <begin position="96"/>
        <end position="148"/>
    </location>
</feature>
<organism>
    <name type="scientific">Brucella canis (strain ATCC 23365 / NCTC 10854 / RM-666)</name>
    <dbReference type="NCBI Taxonomy" id="483179"/>
    <lineage>
        <taxon>Bacteria</taxon>
        <taxon>Pseudomonadati</taxon>
        <taxon>Pseudomonadota</taxon>
        <taxon>Alphaproteobacteria</taxon>
        <taxon>Hyphomicrobiales</taxon>
        <taxon>Brucellaceae</taxon>
        <taxon>Brucella/Ochrobactrum group</taxon>
        <taxon>Brucella</taxon>
    </lineage>
</organism>
<comment type="function">
    <text evidence="1">Binds together with bS18 to 16S ribosomal RNA.</text>
</comment>
<comment type="similarity">
    <text evidence="1">Belongs to the bacterial ribosomal protein bS6 family.</text>
</comment>
<evidence type="ECO:0000255" key="1">
    <source>
        <dbReference type="HAMAP-Rule" id="MF_00360"/>
    </source>
</evidence>
<evidence type="ECO:0000256" key="2">
    <source>
        <dbReference type="SAM" id="MobiDB-lite"/>
    </source>
</evidence>
<evidence type="ECO:0000305" key="3"/>
<name>RS6_BRUC2</name>
<accession>A9M8X8</accession>